<feature type="transit peptide" description="Mitochondrion" evidence="1">
    <location>
        <begin position="1"/>
        <end position="36"/>
    </location>
</feature>
<feature type="chain" id="PRO_0000191239" description="Mitochondrial disaggregase">
    <location>
        <begin position="37"/>
        <end position="707"/>
    </location>
</feature>
<feature type="chain" id="PRO_0000458241" description="Mitochondrial disaggregase, cleaved form" evidence="4">
    <location>
        <begin position="127"/>
        <end position="707"/>
    </location>
</feature>
<feature type="repeat" description="ANK 1">
    <location>
        <begin position="133"/>
        <end position="162"/>
    </location>
</feature>
<feature type="repeat" description="ANK 2">
    <location>
        <begin position="166"/>
        <end position="195"/>
    </location>
</feature>
<feature type="repeat" description="ANK 3">
    <location>
        <begin position="265"/>
        <end position="295"/>
    </location>
</feature>
<feature type="repeat" description="ANK 4">
    <location>
        <begin position="298"/>
        <end position="327"/>
    </location>
</feature>
<feature type="region of interest" description="Autoinhibitory" evidence="6">
    <location>
        <begin position="92"/>
        <end position="126"/>
    </location>
</feature>
<feature type="region of interest" description="Regulatory; slows ATPase and disaggregase activities" evidence="12">
    <location>
        <begin position="507"/>
        <end position="535"/>
    </location>
</feature>
<feature type="binding site" evidence="12 17 18">
    <location>
        <position position="346"/>
    </location>
    <ligand>
        <name>ATP</name>
        <dbReference type="ChEBI" id="CHEBI:30616"/>
    </ligand>
</feature>
<feature type="binding site" evidence="12 13 17 18 19">
    <location>
        <position position="348"/>
    </location>
    <ligand>
        <name>ATP</name>
        <dbReference type="ChEBI" id="CHEBI:30616"/>
    </ligand>
</feature>
<feature type="binding site" evidence="13 19">
    <location>
        <position position="383"/>
    </location>
    <ligand>
        <name>ATP</name>
        <dbReference type="ChEBI" id="CHEBI:30616"/>
    </ligand>
</feature>
<feature type="binding site" evidence="12 17 18">
    <location>
        <position position="384"/>
    </location>
    <ligand>
        <name>ATP</name>
        <dbReference type="ChEBI" id="CHEBI:30616"/>
    </ligand>
</feature>
<feature type="binding site" evidence="13 19">
    <location>
        <position position="385"/>
    </location>
    <ligand>
        <name>ATP</name>
        <dbReference type="ChEBI" id="CHEBI:30616"/>
    </ligand>
</feature>
<feature type="binding site" evidence="12 13 17 18 19">
    <location>
        <position position="386"/>
    </location>
    <ligand>
        <name>ATP</name>
        <dbReference type="ChEBI" id="CHEBI:30616"/>
    </ligand>
</feature>
<feature type="binding site" evidence="13 19">
    <location>
        <position position="387"/>
    </location>
    <ligand>
        <name>ATP</name>
        <dbReference type="ChEBI" id="CHEBI:30616"/>
    </ligand>
</feature>
<feature type="binding site" evidence="12 13 17 18 19">
    <location>
        <position position="388"/>
    </location>
    <ligand>
        <name>ATP</name>
        <dbReference type="ChEBI" id="CHEBI:30616"/>
    </ligand>
</feature>
<feature type="binding site" evidence="13 19">
    <location>
        <position position="455"/>
    </location>
    <ligand>
        <name>ATP</name>
        <dbReference type="ChEBI" id="CHEBI:30616"/>
    </ligand>
</feature>
<feature type="binding site" evidence="13 19">
    <location>
        <position position="496"/>
    </location>
    <ligand>
        <name>ATP</name>
        <dbReference type="ChEBI" id="CHEBI:30616"/>
    </ligand>
</feature>
<feature type="binding site" evidence="13 19">
    <location>
        <position position="561"/>
    </location>
    <ligand>
        <name>ATP</name>
        <dbReference type="ChEBI" id="CHEBI:30616"/>
    </ligand>
</feature>
<feature type="binding site" evidence="12 13 17 18 19">
    <location>
        <position position="620"/>
    </location>
    <ligand>
        <name>ATP</name>
        <dbReference type="ChEBI" id="CHEBI:30616"/>
    </ligand>
</feature>
<feature type="site" description="Cleavage; by PARL" evidence="4">
    <location>
        <begin position="126"/>
        <end position="127"/>
    </location>
</feature>
<feature type="modified residue" description="N6-acetyllysine" evidence="21">
    <location>
        <position position="589"/>
    </location>
</feature>
<feature type="splice variant" id="VSP_057397" description="In isoform 5." evidence="14">
    <location>
        <begin position="1"/>
        <end position="171"/>
    </location>
</feature>
<feature type="splice variant" id="VSP_044725" description="In isoform 4." evidence="14">
    <original>MLGSLVLRRKALAPRLLLRLLRSPTLRGHGGASGRNVTTGSLGEPQWLRVATGGRPGTSPALFSGRGAATGGRQGGRFDTKCLAAATWGRLPGPEETLPGQDSWNGVPSRAGLGMCALAAALVVHCYSKSPSNKDAALLEAARANNMQEVS</original>
    <variation>MPRGCHLGTPSWSRRNTPRTGQLERGPQQGRTGHVRPGRSAGGSLLQQESVQQGCSPVGSCPCQQYARSQQPQETAKNDAQSRSWAGLNAGVSLKNTKISSSEWPL</variation>
    <location>
        <begin position="1"/>
        <end position="151"/>
    </location>
</feature>
<feature type="splice variant" id="VSP_044726" description="In isoform 3." evidence="14">
    <location>
        <begin position="152"/>
        <end position="180"/>
    </location>
</feature>
<feature type="splice variant" id="VSP_001106" description="In isoform 2, isoform 3 and isoform 5." evidence="14">
    <location>
        <begin position="216"/>
        <end position="245"/>
    </location>
</feature>
<feature type="sequence variant" id="VAR_073397" description="In MGCA7B; increased ATP hydrolysis activity; severely decreased ATP-dependent protein disaggregase activity; dbSNP:rs200032855." evidence="3 6">
    <original>T</original>
    <variation>M</variation>
    <location>
        <position position="268"/>
    </location>
</feature>
<feature type="sequence variant" id="VAR_073398" description="In MGCA7B; dbSNP:rs777313457." evidence="2">
    <original>Y</original>
    <variation>C</variation>
    <location>
        <position position="272"/>
    </location>
</feature>
<feature type="sequence variant" id="VAR_048740" description="In dbSNP:rs7938203.">
    <original>R</original>
    <variation>T</variation>
    <location>
        <position position="295"/>
    </location>
</feature>
<feature type="sequence variant" id="VAR_087351" description="In dbSNP:rs148534573." evidence="8">
    <original>R</original>
    <variation>W</variation>
    <location>
        <position position="327"/>
    </location>
</feature>
<feature type="sequence variant" id="VAR_087352" description="In SCN9; dbSNP:rs2135510485." evidence="8">
    <original>T</original>
    <variation>K</variation>
    <location>
        <position position="388"/>
    </location>
</feature>
<feature type="sequence variant" id="VAR_087353" description="In MGCA7A; decreased ATP hydrolysis activity; decreased ATP-dependent protein disaggregase activity." evidence="9">
    <original>K</original>
    <variation>T</variation>
    <location>
        <position position="404"/>
    </location>
</feature>
<feature type="sequence variant" id="VAR_073399" description="In MGCA7B; decreased ATP hydrolysis activity; decreased ATP-dependent protein disaggregase activity; not changed mitochondrial respiration; dbSNP:rs144078282." evidence="2 8">
    <original>R</original>
    <variation>G</variation>
    <location>
        <position position="408"/>
    </location>
</feature>
<feature type="sequence variant" id="VAR_073400" description="In MGCA7B; dbSNP:rs786205137." evidence="2">
    <original>M</original>
    <variation>I</variation>
    <location>
        <position position="411"/>
    </location>
</feature>
<feature type="sequence variant" id="VAR_087354" description="In MGCA7A; decreased ATP hydrolysis activity; decreased ATP-dependent protein disaggregase activity; dbSNP:rs2135500838." evidence="9">
    <original>P</original>
    <variation>L</variation>
    <location>
        <position position="427"/>
    </location>
</feature>
<feature type="sequence variant" id="VAR_073401" description="In MGCA7B." evidence="2">
    <original>EG</original>
    <variation>DP</variation>
    <location>
        <begin position="435"/>
        <end position="436"/>
    </location>
</feature>
<feature type="sequence variant" id="VAR_073402" description="In MGCA7B; dbSNP:rs886041118." evidence="2">
    <original>C</original>
    <variation>R</variation>
    <location>
        <position position="486"/>
    </location>
</feature>
<feature type="sequence variant" id="VAR_087355" description="In SCN9; decreased granulocyte differentiation; decreased ATP hydrolysis activity; decreased ATP-dependent protein disaggregase activity; does not render cells more sensitive to ER stress-induced apoptosis." evidence="8">
    <original>N</original>
    <variation>K</variation>
    <location>
        <position position="496"/>
    </location>
</feature>
<feature type="sequence variant" id="VAR_073403" description="In MGCA7B; dbSNP:rs748915609." evidence="2">
    <original>E</original>
    <variation>K</variation>
    <location>
        <position position="501"/>
    </location>
</feature>
<feature type="sequence variant" id="VAR_087356" description="In SCN9; decreased granulocyte differentiation; decreased ATP hydrolysis activity; decreased ATP-dependent protein disaggregase activity; decreased mitochondrial respiration; dbSNP:rs1590753263." evidence="8">
    <original>E</original>
    <variation>K</variation>
    <location>
        <position position="557"/>
    </location>
</feature>
<feature type="sequence variant" id="VAR_087357" description="In MGCA7A; decreased ATP hydrolysis activity; decreased ATP-dependent protein disaggregase activity; dbSNP:rs2135485868." evidence="9">
    <original>G</original>
    <variation>R</variation>
    <location>
        <position position="560"/>
    </location>
</feature>
<feature type="sequence variant" id="VAR_087358" description="In SCN9; decreased granulocyte differentiation; loss of ATP hydrolysis activity; loss of ATP-dependent protein disaggregase activity; decreased mitochondrial respiration; dbSNP:rs1949512456." evidence="8">
    <original>R</original>
    <variation>G</variation>
    <location>
        <position position="561"/>
    </location>
</feature>
<feature type="sequence variant" id="VAR_087359" description="In SCN9; decreased mitochondrial respiration; dbSNP:rs1590753221." evidence="8">
    <original>R</original>
    <variation>Q</variation>
    <location>
        <position position="561"/>
    </location>
</feature>
<feature type="sequence variant" id="VAR_087360" description="In MGCA7A; dbSNP:rs1949512456." evidence="9">
    <original>R</original>
    <variation>W</variation>
    <location>
        <position position="561"/>
    </location>
</feature>
<feature type="sequence variant" id="VAR_073404" description="In MGCA7B; dbSNP:rs150857620." evidence="2">
    <original>Y</original>
    <variation>C</variation>
    <location>
        <position position="567"/>
    </location>
</feature>
<feature type="sequence variant" id="VAR_073405" description="In MGCA7B; loss of ATP hydrolysis activity; loss of ATP-dependent protein disaggregase activity; dbSNP:rs748010262." evidence="2 6">
    <original>A</original>
    <variation>V</variation>
    <location>
        <position position="591"/>
    </location>
</feature>
<feature type="sequence variant" id="VAR_087361" description="Normal ATP hydrolysis activity; normal ATP-dependent protein disaggregase activity; dbSNP:rs765245566." evidence="8">
    <original>R</original>
    <variation>H</variation>
    <location>
        <position position="603"/>
    </location>
</feature>
<feature type="sequence variant" id="VAR_073406" description="In MGCA7B; dbSNP:rs786205138." evidence="2">
    <original>Y</original>
    <variation>C</variation>
    <location>
        <position position="617"/>
    </location>
</feature>
<feature type="sequence variant" id="VAR_087362" description="In SCN9; decreased granulocyte differentiation; loss of ATP hydrolysis activity; loss of ATP-dependent protein disaggregase activity; does not render cells more sensitive to ER stress-induced apoptosis; dbSNP:rs2135484821." evidence="8">
    <original>R</original>
    <variation>C</variation>
    <location>
        <position position="620"/>
    </location>
</feature>
<feature type="sequence variant" id="VAR_087363" description="In MGCA7B; uncertain significance; dbSNP:rs150343959." evidence="11">
    <original>R</original>
    <variation>C</variation>
    <location>
        <position position="628"/>
    </location>
</feature>
<feature type="sequence variant" id="VAR_087364" description="In MGCA7B; uncertain significance; requires 2 nucleotide substitutions." evidence="11">
    <original>A</original>
    <variation>K</variation>
    <location>
        <position position="635"/>
    </location>
</feature>
<feature type="sequence variant" id="VAR_073407" description="In MGCA7B; dbSNP:rs759500860." evidence="2">
    <original>G</original>
    <variation>V</variation>
    <location>
        <position position="646"/>
    </location>
</feature>
<feature type="sequence variant" id="VAR_073408" description="In MGCA7B; dbSNP:rs886041120." evidence="2">
    <original>I</original>
    <variation>N</variation>
    <location>
        <position position="682"/>
    </location>
</feature>
<feature type="mutagenesis site" description="Shows higher order assembly but disaggregase activity is severely impaired by 70-80%." evidence="13">
    <original>R</original>
    <variation>E</variation>
    <location>
        <position position="178"/>
    </location>
</feature>
<feature type="mutagenesis site" description="Shows higher order assembly but disaggregase activity is severely impaired by 70-80%." evidence="13">
    <original>R</original>
    <variation>E</variation>
    <location>
        <position position="257"/>
    </location>
</feature>
<feature type="mutagenesis site" description="Loss of ATP hydrolysis activity. Loss of ATP-dependent protein disaggregase activity." evidence="6">
    <original>K</original>
    <variation>A</variation>
    <location>
        <position position="387"/>
    </location>
</feature>
<feature type="mutagenesis site" description="No effect on ATPase activity but shows decreased disaggregase activity." evidence="12">
    <original>R</original>
    <variation>A</variation>
    <location>
        <position position="417"/>
    </location>
</feature>
<feature type="mutagenesis site" description="Decreased ATP hydrolysis activity. Loss of ATP-dependent protein disaggregase activity." evidence="6">
    <original>Y</original>
    <variation>A</variation>
    <location>
        <position position="430"/>
    </location>
</feature>
<feature type="mutagenesis site" description="Decreased ATP hydrolysis activity. Loss of ATP-dependent protein disaggregase activity." evidence="12">
    <original>V</original>
    <variation>G</variation>
    <location>
        <position position="431"/>
    </location>
</feature>
<feature type="mutagenesis site" description="Loss of ATP hydrolysis activity at pH 8.0. No effect on ATP hydrolysis activity at pH 6.8. Loss of ATP-dependent protein disaggregase activity at pH 8.0 and 6.8." evidence="6 13">
    <original>E</original>
    <variation>Q</variation>
    <location>
        <position position="455"/>
    </location>
</feature>
<feature type="mutagenesis site" description="Severely decreased ATP hydrolysis activity. Loss of ATP-dependent protein disaggregase activity." evidence="6">
    <original>R</original>
    <variation>Q</variation>
    <location>
        <position position="475"/>
    </location>
</feature>
<feature type="mutagenesis site" description="No effect on ATP hydrolysis activity. Loss of ATP-dependent protein disaggregase activity." evidence="6">
    <original>R</original>
    <variation>P</variation>
    <location>
        <position position="650"/>
    </location>
</feature>
<feature type="sequence conflict" description="In Ref. 2; BAG63459." evidence="15" ref="2">
    <original>E</original>
    <variation>K</variation>
    <location>
        <position position="413"/>
    </location>
</feature>
<feature type="sequence conflict" description="In Ref. 2; BAG63409." evidence="15" ref="2">
    <original>N</original>
    <variation>S</variation>
    <location>
        <position position="563"/>
    </location>
</feature>
<feature type="sequence conflict" description="In Ref. 2; BAG63459." evidence="15" ref="2">
    <original>R</original>
    <variation>C</variation>
    <location>
        <position position="650"/>
    </location>
</feature>
<feature type="helix" evidence="26">
    <location>
        <begin position="133"/>
        <end position="144"/>
    </location>
</feature>
<feature type="helix" evidence="26">
    <location>
        <begin position="147"/>
        <end position="155"/>
    </location>
</feature>
<feature type="helix" evidence="26">
    <location>
        <begin position="170"/>
        <end position="176"/>
    </location>
</feature>
<feature type="helix" evidence="26">
    <location>
        <begin position="180"/>
        <end position="188"/>
    </location>
</feature>
<feature type="helix" evidence="26">
    <location>
        <begin position="202"/>
        <end position="209"/>
    </location>
</feature>
<feature type="helix" evidence="25">
    <location>
        <begin position="233"/>
        <end position="239"/>
    </location>
</feature>
<feature type="helix" evidence="26">
    <location>
        <begin position="246"/>
        <end position="253"/>
    </location>
</feature>
<feature type="strand" evidence="26">
    <location>
        <begin position="256"/>
        <end position="258"/>
    </location>
</feature>
<feature type="strand" evidence="25">
    <location>
        <begin position="261"/>
        <end position="263"/>
    </location>
</feature>
<feature type="helix" evidence="26">
    <location>
        <begin position="269"/>
        <end position="275"/>
    </location>
</feature>
<feature type="helix" evidence="26">
    <location>
        <begin position="279"/>
        <end position="287"/>
    </location>
</feature>
<feature type="helix" evidence="26">
    <location>
        <begin position="303"/>
        <end position="305"/>
    </location>
</feature>
<feature type="helix" evidence="26">
    <location>
        <begin position="310"/>
        <end position="327"/>
    </location>
</feature>
<feature type="helix" evidence="22">
    <location>
        <begin position="328"/>
        <end position="335"/>
    </location>
</feature>
<feature type="helix" evidence="25">
    <location>
        <begin position="339"/>
        <end position="343"/>
    </location>
</feature>
<feature type="helix" evidence="24">
    <location>
        <begin position="351"/>
        <end position="365"/>
    </location>
</feature>
<feature type="strand" evidence="24">
    <location>
        <begin position="371"/>
        <end position="373"/>
    </location>
</feature>
<feature type="strand" evidence="24">
    <location>
        <begin position="375"/>
        <end position="377"/>
    </location>
</feature>
<feature type="strand" evidence="24">
    <location>
        <begin position="379"/>
        <end position="386"/>
    </location>
</feature>
<feature type="helix" evidence="24">
    <location>
        <begin position="387"/>
        <end position="399"/>
    </location>
</feature>
<feature type="strand" evidence="24">
    <location>
        <begin position="405"/>
        <end position="410"/>
    </location>
</feature>
<feature type="helix" evidence="23">
    <location>
        <begin position="411"/>
        <end position="413"/>
    </location>
</feature>
<feature type="helix" evidence="24">
    <location>
        <begin position="417"/>
        <end position="419"/>
    </location>
</feature>
<feature type="helix" evidence="24">
    <location>
        <begin position="420"/>
        <end position="424"/>
    </location>
</feature>
<feature type="turn" evidence="24">
    <location>
        <begin position="431"/>
        <end position="435"/>
    </location>
</feature>
<feature type="helix" evidence="24">
    <location>
        <begin position="438"/>
        <end position="444"/>
    </location>
</feature>
<feature type="strand" evidence="24">
    <location>
        <begin position="450"/>
        <end position="454"/>
    </location>
</feature>
<feature type="turn" evidence="24">
    <location>
        <begin position="455"/>
        <end position="458"/>
    </location>
</feature>
<feature type="helix" evidence="24">
    <location>
        <begin position="463"/>
        <end position="466"/>
    </location>
</feature>
<feature type="helix" evidence="24">
    <location>
        <begin position="467"/>
        <end position="472"/>
    </location>
</feature>
<feature type="strand" evidence="23">
    <location>
        <begin position="474"/>
        <end position="477"/>
    </location>
</feature>
<feature type="strand" evidence="23">
    <location>
        <begin position="483"/>
        <end position="485"/>
    </location>
</feature>
<feature type="strand" evidence="24">
    <location>
        <begin position="490"/>
        <end position="495"/>
    </location>
</feature>
<feature type="helix" evidence="24">
    <location>
        <begin position="499"/>
        <end position="522"/>
    </location>
</feature>
<feature type="helix" evidence="24">
    <location>
        <begin position="538"/>
        <end position="543"/>
    </location>
</feature>
<feature type="helix" evidence="24">
    <location>
        <begin position="545"/>
        <end position="553"/>
    </location>
</feature>
<feature type="helix" evidence="24">
    <location>
        <begin position="556"/>
        <end position="560"/>
    </location>
</feature>
<feature type="strand" evidence="23">
    <location>
        <begin position="564"/>
        <end position="567"/>
    </location>
</feature>
<feature type="helix" evidence="24">
    <location>
        <begin position="573"/>
        <end position="593"/>
    </location>
</feature>
<feature type="helix" evidence="23">
    <location>
        <begin position="594"/>
        <end position="596"/>
    </location>
</feature>
<feature type="helix" evidence="24">
    <location>
        <begin position="603"/>
        <end position="611"/>
    </location>
</feature>
<feature type="turn" evidence="24">
    <location>
        <begin position="615"/>
        <end position="618"/>
    </location>
</feature>
<feature type="helix" evidence="24">
    <location>
        <begin position="619"/>
        <end position="639"/>
    </location>
</feature>
<feature type="strand" evidence="24">
    <location>
        <begin position="648"/>
        <end position="653"/>
    </location>
</feature>
<feature type="strand" evidence="23">
    <location>
        <begin position="657"/>
        <end position="665"/>
    </location>
</feature>
<feature type="strand" evidence="24">
    <location>
        <begin position="678"/>
        <end position="685"/>
    </location>
</feature>
<comment type="function">
    <text evidence="5 6 8 10 12 13">Functions as a regulatory ATPase and participates in secretion/protein trafficking process. Has ATP-dependent protein disaggregase activity and is required to maintain the solubility of key mitochondrial proteins (PubMed:32573439, PubMed:34115842, PubMed:35247700, PubMed:36170828, PubMed:36745679). Involved in mitochondrial-mediated antiviral innate immunity, activates RIG-I-mediated signal transduction and production of IFNB1 and pro-inflammatory cytokine IL6 (PubMed:31522117). Plays a role in granulocyte differentiation (PubMed:34115842).</text>
</comment>
<comment type="catalytic activity">
    <reaction evidence="2 10 12 13">
        <text>ATP + H2O = ADP + phosphate + H(+)</text>
        <dbReference type="Rhea" id="RHEA:13065"/>
        <dbReference type="ChEBI" id="CHEBI:15377"/>
        <dbReference type="ChEBI" id="CHEBI:15378"/>
        <dbReference type="ChEBI" id="CHEBI:30616"/>
        <dbReference type="ChEBI" id="CHEBI:43474"/>
        <dbReference type="ChEBI" id="CHEBI:456216"/>
    </reaction>
</comment>
<comment type="activity regulation">
    <text evidence="12">Disaggregase activity is inhibited by ADP.</text>
</comment>
<comment type="biophysicochemical properties">
    <kinetics>
        <KM evidence="12">64.6 uM for ATP</KM>
    </kinetics>
</comment>
<comment type="subunit">
    <text evidence="5 10 12 13">Homododecamer when substrate-bound; the homododecamer consists of 2 homohexamers stacked head-to-head via ANK repeat-mediated interactions (PubMed:35247700, PubMed:36170828, PubMed:36745679). The active substrate-bound form is likely to exist in a dynamic equilibrium between homohexamers and homododecamers (PubMed:36170828). Homotetradecamer in the unbound state which is remodeled upon substrate binding into the homododecamer (PubMed:36170828, PubMed:36745679). Interacts with PHB and PHB2 (PubMed:31522117). Interacts with MAVS; the interaction is enhanced by Sendai virus infection (PubMed:31522117).</text>
</comment>
<comment type="interaction">
    <interactant intactId="EBI-2107221">
        <id>Q9H078</id>
    </interactant>
    <interactant intactId="EBI-739624">
        <id>Q8NHQ1</id>
        <label>CEP70</label>
    </interactant>
    <organismsDiffer>false</organismsDiffer>
    <experiments>3</experiments>
</comment>
<comment type="interaction">
    <interactant intactId="EBI-2107221">
        <id>Q9H078</id>
    </interactant>
    <interactant intactId="EBI-954554">
        <id>P15374</id>
        <label>UCHL3</label>
    </interactant>
    <organismsDiffer>false</organismsDiffer>
    <experiments>3</experiments>
</comment>
<comment type="subcellular location">
    <subcellularLocation>
        <location evidence="2 5 7 8">Mitochondrion intermembrane space</location>
    </subcellularLocation>
</comment>
<comment type="alternative products">
    <event type="alternative splicing"/>
    <isoform>
        <id>Q9H078-1</id>
        <name>1</name>
        <sequence type="displayed"/>
    </isoform>
    <isoform>
        <id>Q9H078-2</id>
        <name>2</name>
        <sequence type="described" ref="VSP_001106"/>
    </isoform>
    <isoform>
        <id>Q9H078-3</id>
        <name>3</name>
        <sequence type="described" ref="VSP_044726 VSP_001106"/>
    </isoform>
    <isoform>
        <id>Q9H078-4</id>
        <name>4</name>
        <sequence type="described" ref="VSP_044725"/>
    </isoform>
    <isoform>
        <id>Q9H078-5</id>
        <name>5</name>
        <sequence type="described" ref="VSP_057397 VSP_001106"/>
    </isoform>
</comment>
<comment type="tissue specificity">
    <text evidence="2 3">Widely expressed (at protein level) (PubMed:25597511). Expressed in fetal, as well as in adult tissues, with highest levels in adult brain, including thalamus, hippocampus, occipital cortex and parietal cortex. Low expression in granulocytes (PubMed:25597510).</text>
</comment>
<comment type="domain">
    <text evidence="6 12 13">The ankyrin-repeat region is necessary for ATP-dependent protein disaggregase activity (PubMed:32573439, PubMed:36745679). It plays an important role in stabilizing the substrate-bound homododecamer by mediating contacts between the two homohexamers (PubMed:36170828).</text>
</comment>
<comment type="PTM">
    <text evidence="4 6">Proteolytically cleaved by protease PARL (PubMed:28288130). ATP-dependent protein disaggregase activity is stimulated by PARL-mediated cleavage of the N-terminal autoinhibitory peptide.</text>
</comment>
<comment type="disease" evidence="2 3 6 8 11">
    <disease id="DI-04365">
        <name>3-methylglutaconic aciduria 7B</name>
        <acronym>MGCA7B</acronym>
        <description>An autosomal recessive inborn error of metabolism with a highly variable phenotype. Primary disease symptoms are increased levels of 3-methylglutaconic acid, neurologic deterioration and neutropenia. Other common features include progressive encephalopathy, movement abnormalities, delayed psychomotor development,impaired intellectual development, cataracts, seizures, and recurrent infections.</description>
        <dbReference type="MIM" id="616271"/>
    </disease>
    <text>The disease is caused by variants affecting the gene represented in this entry.</text>
</comment>
<comment type="disease" evidence="9">
    <disease id="DI-06387">
        <name>3-methylglutaconic aciduria 7A</name>
        <acronym>MGCA7A</acronym>
        <description>An autosomal dominant inborn error of metabolism with a highly variable phenotype. Primary disease symptoms are increased levels of 3-methylglutaconic acid, neurologic deterioration and neutropenia. Other common features include progressive encephalopathy, movement abnormalities, delayed psychomotor development, impaired intellectual development, cataracts, seizures, and recurrent infections.</description>
        <dbReference type="MIM" id="619835"/>
    </disease>
    <text>The disease is caused by variants affecting the gene represented in this entry.</text>
</comment>
<comment type="disease" evidence="8">
    <disease id="DI-06386">
        <name>Neutropenia, severe congenital 9, autosomal dominant</name>
        <acronym>SCN9</acronym>
        <description>A form of severe congenital neutropenia, a disorder of hematopoiesis characterized by maturation arrest of granulopoiesis at the level of promyelocytes with peripheral blood absolute neutrophil counts below 0.5 x 10(9)/l and early onset of severe bacterial infections. SCN9 is characterized by onset of neutropenia in the first years of life. Rare patients may exhibit additional features such as seizures, learning difficulties, or cataracts. Patients with SCN9 do not have 3-methylglutaconic aciduria.</description>
        <dbReference type="MIM" id="619813"/>
    </disease>
    <text>The disease is caused by variants affecting the gene represented in this entry.</text>
</comment>
<comment type="miscellaneous">
    <text evidence="12">Hexamers display robustness and can tolerate some mutant subunits without loss of activity (PubMed:36170828). Subunits containing SCN9-linked variants Lys-496, Gly-561 and Cys-620 inhibit ATPase and disaggregase activities of the hexamer more severely than those containing MGCA7-linked variants Gly-408, Gly-475 and Val-591 (PubMed:36170828).</text>
</comment>
<comment type="similarity">
    <text evidence="15">Belongs to the ClpA/ClpB family.</text>
</comment>
<comment type="caution">
    <text evidence="15">Despite its gene name, this protein differs in domain structure from bacterial clpB. Bacterial clpB contains two AAA modules, one in the N-terminal part of the protein and one in the C-terminal part, separated by a coiled coil, while vertebrate CLPB contains a single C-terminal AAA region and an N-terminal ANK repeat region which is absent from bacterial clpB.</text>
</comment>
<name>CLPB_HUMAN</name>
<dbReference type="EC" id="3.6.1.-" evidence="2 10 12 13"/>
<dbReference type="EMBL" id="AL136909">
    <property type="protein sequence ID" value="CAB66843.1"/>
    <property type="molecule type" value="mRNA"/>
</dbReference>
<dbReference type="EMBL" id="AL834484">
    <property type="protein sequence ID" value="CAD39142.1"/>
    <property type="molecule type" value="mRNA"/>
</dbReference>
<dbReference type="EMBL" id="AK023214">
    <property type="protein sequence ID" value="BAB14467.1"/>
    <property type="molecule type" value="mRNA"/>
</dbReference>
<dbReference type="EMBL" id="AK302006">
    <property type="protein sequence ID" value="BAG63409.1"/>
    <property type="molecule type" value="mRNA"/>
</dbReference>
<dbReference type="EMBL" id="AK302069">
    <property type="protein sequence ID" value="BAG63459.1"/>
    <property type="molecule type" value="mRNA"/>
</dbReference>
<dbReference type="EMBL" id="AK302158">
    <property type="protein sequence ID" value="BAG63526.1"/>
    <property type="molecule type" value="mRNA"/>
</dbReference>
<dbReference type="EMBL" id="AP000593">
    <property type="status" value="NOT_ANNOTATED_CDS"/>
    <property type="molecule type" value="Genomic_DNA"/>
</dbReference>
<dbReference type="EMBL" id="AP002892">
    <property type="status" value="NOT_ANNOTATED_CDS"/>
    <property type="molecule type" value="Genomic_DNA"/>
</dbReference>
<dbReference type="EMBL" id="AP003785">
    <property type="status" value="NOT_ANNOTATED_CDS"/>
    <property type="molecule type" value="Genomic_DNA"/>
</dbReference>
<dbReference type="EMBL" id="BC006404">
    <property type="protein sequence ID" value="AAH06404.1"/>
    <property type="molecule type" value="mRNA"/>
</dbReference>
<dbReference type="CCDS" id="CCDS58153.1">
    <molecule id="Q9H078-3"/>
</dbReference>
<dbReference type="CCDS" id="CCDS58154.1">
    <molecule id="Q9H078-2"/>
</dbReference>
<dbReference type="CCDS" id="CCDS8215.1">
    <molecule id="Q9H078-1"/>
</dbReference>
<dbReference type="RefSeq" id="NP_001245321.1">
    <molecule id="Q9H078-2"/>
    <property type="nucleotide sequence ID" value="NM_001258392.3"/>
</dbReference>
<dbReference type="RefSeq" id="NP_001245322.1">
    <molecule id="Q9H078-3"/>
    <property type="nucleotide sequence ID" value="NM_001258393.3"/>
</dbReference>
<dbReference type="RefSeq" id="NP_001245323.1">
    <molecule id="Q9H078-4"/>
    <property type="nucleotide sequence ID" value="NM_001258394.3"/>
</dbReference>
<dbReference type="RefSeq" id="NP_110440.1">
    <molecule id="Q9H078-1"/>
    <property type="nucleotide sequence ID" value="NM_030813.6"/>
</dbReference>
<dbReference type="PDB" id="7TTR">
    <property type="method" value="EM"/>
    <property type="resolution" value="2.96 A"/>
    <property type="chains" value="A/B/C/D/E/F=127-707"/>
</dbReference>
<dbReference type="PDB" id="7TTS">
    <property type="method" value="EM"/>
    <property type="resolution" value="2.90 A"/>
    <property type="chains" value="A/B/C/D/E/F=127-707"/>
</dbReference>
<dbReference type="PDB" id="7US2">
    <property type="method" value="EM"/>
    <property type="resolution" value="2.76 A"/>
    <property type="chains" value="A/B/C/D/E/F=127-707"/>
</dbReference>
<dbReference type="PDB" id="7XBK">
    <property type="method" value="EM"/>
    <property type="resolution" value="3.70 A"/>
    <property type="chains" value="A/B/C/D/E/F/G/H/I=1-707"/>
</dbReference>
<dbReference type="PDB" id="7XC5">
    <property type="method" value="X-ray"/>
    <property type="resolution" value="2.10 A"/>
    <property type="chains" value="A=128-327"/>
</dbReference>
<dbReference type="PDB" id="8DEH">
    <property type="method" value="X-ray"/>
    <property type="resolution" value="1.81 A"/>
    <property type="chains" value="A=132-351"/>
</dbReference>
<dbReference type="PDB" id="8FDS">
    <property type="method" value="X-ray"/>
    <property type="resolution" value="1.65 A"/>
    <property type="chains" value="A=127-330"/>
</dbReference>
<dbReference type="PDBsum" id="7TTR"/>
<dbReference type="PDBsum" id="7TTS"/>
<dbReference type="PDBsum" id="7US2"/>
<dbReference type="PDBsum" id="7XBK"/>
<dbReference type="PDBsum" id="7XC5"/>
<dbReference type="PDBsum" id="8DEH"/>
<dbReference type="PDBsum" id="8FDS"/>
<dbReference type="EMDB" id="EMD-26121"/>
<dbReference type="EMDB" id="EMD-26122"/>
<dbReference type="EMDB" id="EMD-26722"/>
<dbReference type="EMDB" id="EMD-26725"/>
<dbReference type="EMDB" id="EMD-26726"/>
<dbReference type="EMDB" id="EMD-26728"/>
<dbReference type="EMDB" id="EMD-33104"/>
<dbReference type="EMDB" id="EMD-33105"/>
<dbReference type="SMR" id="Q9H078"/>
<dbReference type="BioGRID" id="123531">
    <property type="interactions" value="241"/>
</dbReference>
<dbReference type="FunCoup" id="Q9H078">
    <property type="interactions" value="927"/>
</dbReference>
<dbReference type="IntAct" id="Q9H078">
    <property type="interactions" value="138"/>
</dbReference>
<dbReference type="MINT" id="Q9H078"/>
<dbReference type="STRING" id="9606.ENSP00000294053"/>
<dbReference type="GlyGen" id="Q9H078">
    <property type="glycosylation" value="1 site, 1 O-linked glycan (1 site)"/>
</dbReference>
<dbReference type="iPTMnet" id="Q9H078"/>
<dbReference type="MetOSite" id="Q9H078"/>
<dbReference type="PhosphoSitePlus" id="Q9H078"/>
<dbReference type="SwissPalm" id="Q9H078"/>
<dbReference type="BioMuta" id="CLPB"/>
<dbReference type="DMDM" id="25009267"/>
<dbReference type="jPOST" id="Q9H078"/>
<dbReference type="MassIVE" id="Q9H078"/>
<dbReference type="PaxDb" id="9606-ENSP00000294053"/>
<dbReference type="PeptideAtlas" id="Q9H078"/>
<dbReference type="ProteomicsDB" id="18882"/>
<dbReference type="ProteomicsDB" id="29984"/>
<dbReference type="ProteomicsDB" id="5473"/>
<dbReference type="ProteomicsDB" id="80212">
    <molecule id="Q9H078-1"/>
</dbReference>
<dbReference type="ProteomicsDB" id="80213">
    <molecule id="Q9H078-2"/>
</dbReference>
<dbReference type="Pumba" id="Q9H078"/>
<dbReference type="Antibodypedia" id="30838">
    <property type="antibodies" value="190 antibodies from 26 providers"/>
</dbReference>
<dbReference type="DNASU" id="81570"/>
<dbReference type="Ensembl" id="ENST00000294053.9">
    <molecule id="Q9H078-1"/>
    <property type="protein sequence ID" value="ENSP00000294053.3"/>
    <property type="gene ID" value="ENSG00000162129.15"/>
</dbReference>
<dbReference type="Ensembl" id="ENST00000340729.9">
    <molecule id="Q9H078-3"/>
    <property type="protein sequence ID" value="ENSP00000340385.5"/>
    <property type="gene ID" value="ENSG00000162129.15"/>
</dbReference>
<dbReference type="Ensembl" id="ENST00000538039.6">
    <molecule id="Q9H078-2"/>
    <property type="protein sequence ID" value="ENSP00000441518.1"/>
    <property type="gene ID" value="ENSG00000162129.15"/>
</dbReference>
<dbReference type="GeneID" id="81570"/>
<dbReference type="KEGG" id="hsa:81570"/>
<dbReference type="MANE-Select" id="ENST00000538039.6">
    <molecule id="Q9H078-2"/>
    <property type="protein sequence ID" value="ENSP00000441518.1"/>
    <property type="RefSeq nucleotide sequence ID" value="NM_001258392.3"/>
    <property type="RefSeq protein sequence ID" value="NP_001245321.1"/>
</dbReference>
<dbReference type="UCSC" id="uc001osj.5">
    <molecule id="Q9H078-1"/>
    <property type="organism name" value="human"/>
</dbReference>
<dbReference type="UCSC" id="uc010rqz.3">
    <property type="organism name" value="human"/>
</dbReference>
<dbReference type="AGR" id="HGNC:30664"/>
<dbReference type="CTD" id="81570"/>
<dbReference type="DisGeNET" id="81570"/>
<dbReference type="GeneCards" id="CLPB"/>
<dbReference type="GeneReviews" id="CLPB"/>
<dbReference type="HGNC" id="HGNC:30664">
    <property type="gene designation" value="CLPB"/>
</dbReference>
<dbReference type="HPA" id="ENSG00000162129">
    <property type="expression patterns" value="Tissue enriched (testis)"/>
</dbReference>
<dbReference type="MalaCards" id="CLPB"/>
<dbReference type="MIM" id="616254">
    <property type="type" value="gene"/>
</dbReference>
<dbReference type="MIM" id="616271">
    <property type="type" value="phenotype"/>
</dbReference>
<dbReference type="MIM" id="619813">
    <property type="type" value="phenotype"/>
</dbReference>
<dbReference type="MIM" id="619835">
    <property type="type" value="phenotype"/>
</dbReference>
<dbReference type="neXtProt" id="NX_Q9H078"/>
<dbReference type="OpenTargets" id="ENSG00000162129"/>
<dbReference type="Orphanet" id="445038">
    <property type="disease" value="3-methylglutaconic aciduria-neonatal cataract-neurologic involvement-congenital neutropenia syndrome"/>
</dbReference>
<dbReference type="Orphanet" id="486">
    <property type="disease" value="Autosomal dominant severe congenital neutropenia"/>
</dbReference>
<dbReference type="PharmGKB" id="PA142672092"/>
<dbReference type="VEuPathDB" id="HostDB:ENSG00000162129"/>
<dbReference type="eggNOG" id="KOG1051">
    <property type="taxonomic scope" value="Eukaryota"/>
</dbReference>
<dbReference type="GeneTree" id="ENSGT00390000012961"/>
<dbReference type="HOGENOM" id="CLU_005070_9_3_1"/>
<dbReference type="InParanoid" id="Q9H078"/>
<dbReference type="OMA" id="ARYMHRD"/>
<dbReference type="OrthoDB" id="47330at2759"/>
<dbReference type="PAN-GO" id="Q9H078">
    <property type="GO annotations" value="4 GO annotations based on evolutionary models"/>
</dbReference>
<dbReference type="PhylomeDB" id="Q9H078"/>
<dbReference type="TreeFam" id="TF328654"/>
<dbReference type="PathwayCommons" id="Q9H078"/>
<dbReference type="SignaLink" id="Q9H078"/>
<dbReference type="BioGRID-ORCS" id="81570">
    <property type="hits" value="106 hits in 1161 CRISPR screens"/>
</dbReference>
<dbReference type="ChiTaRS" id="CLPB">
    <property type="organism name" value="human"/>
</dbReference>
<dbReference type="GeneWiki" id="CLPB"/>
<dbReference type="GenomeRNAi" id="81570"/>
<dbReference type="Pharos" id="Q9H078">
    <property type="development level" value="Tbio"/>
</dbReference>
<dbReference type="PRO" id="PR:Q9H078"/>
<dbReference type="Proteomes" id="UP000005640">
    <property type="component" value="Chromosome 11"/>
</dbReference>
<dbReference type="RNAct" id="Q9H078">
    <property type="molecule type" value="protein"/>
</dbReference>
<dbReference type="Bgee" id="ENSG00000162129">
    <property type="expression patterns" value="Expressed in sperm and 123 other cell types or tissues"/>
</dbReference>
<dbReference type="ExpressionAtlas" id="Q9H078">
    <property type="expression patterns" value="baseline and differential"/>
</dbReference>
<dbReference type="GO" id="GO:0005737">
    <property type="term" value="C:cytoplasm"/>
    <property type="evidence" value="ECO:0000318"/>
    <property type="project" value="GO_Central"/>
</dbReference>
<dbReference type="GO" id="GO:0005758">
    <property type="term" value="C:mitochondrial intermembrane space"/>
    <property type="evidence" value="ECO:0000314"/>
    <property type="project" value="UniProtKB"/>
</dbReference>
<dbReference type="GO" id="GO:0005739">
    <property type="term" value="C:mitochondrion"/>
    <property type="evidence" value="ECO:0006056"/>
    <property type="project" value="FlyBase"/>
</dbReference>
<dbReference type="GO" id="GO:0005524">
    <property type="term" value="F:ATP binding"/>
    <property type="evidence" value="ECO:0007669"/>
    <property type="project" value="UniProtKB-KW"/>
</dbReference>
<dbReference type="GO" id="GO:0016887">
    <property type="term" value="F:ATP hydrolysis activity"/>
    <property type="evidence" value="ECO:0000315"/>
    <property type="project" value="UniProtKB"/>
</dbReference>
<dbReference type="GO" id="GO:0140545">
    <property type="term" value="F:ATP-dependent protein disaggregase activity"/>
    <property type="evidence" value="ECO:0000314"/>
    <property type="project" value="UniProtKB"/>
</dbReference>
<dbReference type="GO" id="GO:0140374">
    <property type="term" value="P:antiviral innate immune response"/>
    <property type="evidence" value="ECO:0000314"/>
    <property type="project" value="UniProtKB"/>
</dbReference>
<dbReference type="GO" id="GO:0034605">
    <property type="term" value="P:cellular response to heat"/>
    <property type="evidence" value="ECO:0000314"/>
    <property type="project" value="UniProtKB"/>
</dbReference>
<dbReference type="GO" id="GO:0030851">
    <property type="term" value="P:granulocyte differentiation"/>
    <property type="evidence" value="ECO:0000315"/>
    <property type="project" value="UniProtKB"/>
</dbReference>
<dbReference type="GO" id="GO:0039529">
    <property type="term" value="P:RIG-I signaling pathway"/>
    <property type="evidence" value="ECO:0000314"/>
    <property type="project" value="UniProtKB"/>
</dbReference>
<dbReference type="CDD" id="cd19499">
    <property type="entry name" value="RecA-like_ClpB_Hsp104-like"/>
    <property type="match status" value="1"/>
</dbReference>
<dbReference type="FunFam" id="1.10.8.60:FF:000040">
    <property type="entry name" value="caseinolytic peptidase B protein homolog isoform X1"/>
    <property type="match status" value="1"/>
</dbReference>
<dbReference type="FunFam" id="1.25.40.20:FF:000203">
    <property type="entry name" value="caseinolytic peptidase B protein homolog isoform X1"/>
    <property type="match status" value="1"/>
</dbReference>
<dbReference type="FunFam" id="1.25.40.20:FF:000269">
    <property type="entry name" value="caseinolytic peptidase B protein homolog isoform X2"/>
    <property type="match status" value="1"/>
</dbReference>
<dbReference type="FunFam" id="3.40.50.300:FF:000641">
    <property type="entry name" value="caseinolytic peptidase B protein homolog isoform X2"/>
    <property type="match status" value="1"/>
</dbReference>
<dbReference type="Gene3D" id="1.10.8.60">
    <property type="match status" value="1"/>
</dbReference>
<dbReference type="Gene3D" id="1.25.40.20">
    <property type="entry name" value="Ankyrin repeat-containing domain"/>
    <property type="match status" value="2"/>
</dbReference>
<dbReference type="Gene3D" id="3.40.50.300">
    <property type="entry name" value="P-loop containing nucleotide triphosphate hydrolases"/>
    <property type="match status" value="1"/>
</dbReference>
<dbReference type="InterPro" id="IPR003593">
    <property type="entry name" value="AAA+_ATPase"/>
</dbReference>
<dbReference type="InterPro" id="IPR002110">
    <property type="entry name" value="Ankyrin_rpt"/>
</dbReference>
<dbReference type="InterPro" id="IPR036770">
    <property type="entry name" value="Ankyrin_rpt-contain_sf"/>
</dbReference>
<dbReference type="InterPro" id="IPR003959">
    <property type="entry name" value="ATPase_AAA_core"/>
</dbReference>
<dbReference type="InterPro" id="IPR019489">
    <property type="entry name" value="Clp_ATPase_C"/>
</dbReference>
<dbReference type="InterPro" id="IPR001270">
    <property type="entry name" value="ClpA/B"/>
</dbReference>
<dbReference type="InterPro" id="IPR050130">
    <property type="entry name" value="ClpA_ClpB"/>
</dbReference>
<dbReference type="InterPro" id="IPR027417">
    <property type="entry name" value="P-loop_NTPase"/>
</dbReference>
<dbReference type="PANTHER" id="PTHR11638">
    <property type="entry name" value="ATP-DEPENDENT CLP PROTEASE"/>
    <property type="match status" value="1"/>
</dbReference>
<dbReference type="PANTHER" id="PTHR11638:SF93">
    <property type="entry name" value="MITOCHONDRIAL DISAGGREGASE"/>
    <property type="match status" value="1"/>
</dbReference>
<dbReference type="Pfam" id="PF07724">
    <property type="entry name" value="AAA_2"/>
    <property type="match status" value="1"/>
</dbReference>
<dbReference type="Pfam" id="PF12796">
    <property type="entry name" value="Ank_2"/>
    <property type="match status" value="2"/>
</dbReference>
<dbReference type="Pfam" id="PF10431">
    <property type="entry name" value="ClpB_D2-small"/>
    <property type="match status" value="1"/>
</dbReference>
<dbReference type="PRINTS" id="PR00300">
    <property type="entry name" value="CLPPROTEASEA"/>
</dbReference>
<dbReference type="SMART" id="SM00382">
    <property type="entry name" value="AAA"/>
    <property type="match status" value="1"/>
</dbReference>
<dbReference type="SMART" id="SM00248">
    <property type="entry name" value="ANK"/>
    <property type="match status" value="3"/>
</dbReference>
<dbReference type="SMART" id="SM01086">
    <property type="entry name" value="ClpB_D2-small"/>
    <property type="match status" value="1"/>
</dbReference>
<dbReference type="SUPFAM" id="SSF48403">
    <property type="entry name" value="Ankyrin repeat"/>
    <property type="match status" value="1"/>
</dbReference>
<dbReference type="SUPFAM" id="SSF52540">
    <property type="entry name" value="P-loop containing nucleoside triphosphate hydrolases"/>
    <property type="match status" value="1"/>
</dbReference>
<dbReference type="PROSITE" id="PS50297">
    <property type="entry name" value="ANK_REP_REGION"/>
    <property type="match status" value="1"/>
</dbReference>
<dbReference type="PROSITE" id="PS50088">
    <property type="entry name" value="ANK_REPEAT"/>
    <property type="match status" value="3"/>
</dbReference>
<gene>
    <name evidence="16" type="primary">CLPB</name>
    <name type="synonym">SKD3</name>
</gene>
<proteinExistence type="evidence at protein level"/>
<sequence>MLGSLVLRRKALAPRLLLRLLRSPTLRGHGGASGRNVTTGSLGEPQWLRVATGGRPGTSPALFSGRGAATGGRQGGRFDTKCLAAATWGRLPGPEETLPGQDSWNGVPSRAGLGMCALAAALVVHCYSKSPSNKDAALLEAARANNMQEVSRLLSEGADVNAKHRLGWTALMVAAINRNNSVVQVLLAAGADPNLGDDFSSVYKTAKEQGIHSLEDGGQDGASRHITNQWTSALEFRRWLGLPAGVLITREDDFNNRLNNRASFKGCTALHYAVLADDYRTVKELLDGGANPLQRNEMGHTPLDYAREGEVMKLLRTSEAKYQEKQRKREAEERRRFPLEQRLKEHIIGQESAIATVGAAIRRKENGWYDEEHPLVFLFLGSSGIGKTELAKQTAKYMHKDAKKGFIRLDMSEFQERHEVAKFIGSPPGYVGHEEGGQLTKKLKQCPNAVVLFDEVDKAHPDVLTIMLQLFDEGRLTDGKGKTIDCKDAIFIMTSNVASDEIAQHALQLRQEALEMSRNRIAENLGDVQISDKITISKNFKENVIRPILKAHFRRDEFLGRINEIVYFLPFCHSELIQLVNKELNFWAKRAKQRHNITLLWDREVADVLVDGYNVHYGARSIKHEVERRVVNQLAAAYEQDLLPGGCTLRITVEDSDKQLLKSPELPSPQAEKRLPKLRLEIIDKDSKTRRLDIRAPLHPEKVCNTI</sequence>
<keyword id="KW-0002">3D-structure</keyword>
<keyword id="KW-0007">Acetylation</keyword>
<keyword id="KW-0025">Alternative splicing</keyword>
<keyword id="KW-0040">ANK repeat</keyword>
<keyword id="KW-0067">ATP-binding</keyword>
<keyword id="KW-0898">Cataract</keyword>
<keyword id="KW-0225">Disease variant</keyword>
<keyword id="KW-0887">Epilepsy</keyword>
<keyword id="KW-0378">Hydrolase</keyword>
<keyword id="KW-0991">Intellectual disability</keyword>
<keyword id="KW-0496">Mitochondrion</keyword>
<keyword id="KW-0547">Nucleotide-binding</keyword>
<keyword id="KW-1267">Proteomics identification</keyword>
<keyword id="KW-1185">Reference proteome</keyword>
<keyword id="KW-0677">Repeat</keyword>
<keyword id="KW-0809">Transit peptide</keyword>
<reference key="1">
    <citation type="journal article" date="2001" name="Genome Res.">
        <title>Towards a catalog of human genes and proteins: sequencing and analysis of 500 novel complete protein coding human cDNAs.</title>
        <authorList>
            <person name="Wiemann S."/>
            <person name="Weil B."/>
            <person name="Wellenreuther R."/>
            <person name="Gassenhuber J."/>
            <person name="Glassl S."/>
            <person name="Ansorge W."/>
            <person name="Boecher M."/>
            <person name="Bloecker H."/>
            <person name="Bauersachs S."/>
            <person name="Blum H."/>
            <person name="Lauber J."/>
            <person name="Duesterhoeft A."/>
            <person name="Beyer A."/>
            <person name="Koehrer K."/>
            <person name="Strack N."/>
            <person name="Mewes H.-W."/>
            <person name="Ottenwaelder B."/>
            <person name="Obermaier B."/>
            <person name="Tampe J."/>
            <person name="Heubner D."/>
            <person name="Wambutt R."/>
            <person name="Korn B."/>
            <person name="Klein M."/>
            <person name="Poustka A."/>
        </authorList>
    </citation>
    <scope>NUCLEOTIDE SEQUENCE [LARGE SCALE MRNA] (ISOFORM 1)</scope>
    <source>
        <tissue>Testis</tissue>
    </source>
</reference>
<reference key="2">
    <citation type="journal article" date="2004" name="Nat. Genet.">
        <title>Complete sequencing and characterization of 21,243 full-length human cDNAs.</title>
        <authorList>
            <person name="Ota T."/>
            <person name="Suzuki Y."/>
            <person name="Nishikawa T."/>
            <person name="Otsuki T."/>
            <person name="Sugiyama T."/>
            <person name="Irie R."/>
            <person name="Wakamatsu A."/>
            <person name="Hayashi K."/>
            <person name="Sato H."/>
            <person name="Nagai K."/>
            <person name="Kimura K."/>
            <person name="Makita H."/>
            <person name="Sekine M."/>
            <person name="Obayashi M."/>
            <person name="Nishi T."/>
            <person name="Shibahara T."/>
            <person name="Tanaka T."/>
            <person name="Ishii S."/>
            <person name="Yamamoto J."/>
            <person name="Saito K."/>
            <person name="Kawai Y."/>
            <person name="Isono Y."/>
            <person name="Nakamura Y."/>
            <person name="Nagahari K."/>
            <person name="Murakami K."/>
            <person name="Yasuda T."/>
            <person name="Iwayanagi T."/>
            <person name="Wagatsuma M."/>
            <person name="Shiratori A."/>
            <person name="Sudo H."/>
            <person name="Hosoiri T."/>
            <person name="Kaku Y."/>
            <person name="Kodaira H."/>
            <person name="Kondo H."/>
            <person name="Sugawara M."/>
            <person name="Takahashi M."/>
            <person name="Kanda K."/>
            <person name="Yokoi T."/>
            <person name="Furuya T."/>
            <person name="Kikkawa E."/>
            <person name="Omura Y."/>
            <person name="Abe K."/>
            <person name="Kamihara K."/>
            <person name="Katsuta N."/>
            <person name="Sato K."/>
            <person name="Tanikawa M."/>
            <person name="Yamazaki M."/>
            <person name="Ninomiya K."/>
            <person name="Ishibashi T."/>
            <person name="Yamashita H."/>
            <person name="Murakawa K."/>
            <person name="Fujimori K."/>
            <person name="Tanai H."/>
            <person name="Kimata M."/>
            <person name="Watanabe M."/>
            <person name="Hiraoka S."/>
            <person name="Chiba Y."/>
            <person name="Ishida S."/>
            <person name="Ono Y."/>
            <person name="Takiguchi S."/>
            <person name="Watanabe S."/>
            <person name="Yosida M."/>
            <person name="Hotuta T."/>
            <person name="Kusano J."/>
            <person name="Kanehori K."/>
            <person name="Takahashi-Fujii A."/>
            <person name="Hara H."/>
            <person name="Tanase T.-O."/>
            <person name="Nomura Y."/>
            <person name="Togiya S."/>
            <person name="Komai F."/>
            <person name="Hara R."/>
            <person name="Takeuchi K."/>
            <person name="Arita M."/>
            <person name="Imose N."/>
            <person name="Musashino K."/>
            <person name="Yuuki H."/>
            <person name="Oshima A."/>
            <person name="Sasaki N."/>
            <person name="Aotsuka S."/>
            <person name="Yoshikawa Y."/>
            <person name="Matsunawa H."/>
            <person name="Ichihara T."/>
            <person name="Shiohata N."/>
            <person name="Sano S."/>
            <person name="Moriya S."/>
            <person name="Momiyama H."/>
            <person name="Satoh N."/>
            <person name="Takami S."/>
            <person name="Terashima Y."/>
            <person name="Suzuki O."/>
            <person name="Nakagawa S."/>
            <person name="Senoh A."/>
            <person name="Mizoguchi H."/>
            <person name="Goto Y."/>
            <person name="Shimizu F."/>
            <person name="Wakebe H."/>
            <person name="Hishigaki H."/>
            <person name="Watanabe T."/>
            <person name="Sugiyama A."/>
            <person name="Takemoto M."/>
            <person name="Kawakami B."/>
            <person name="Yamazaki M."/>
            <person name="Watanabe K."/>
            <person name="Kumagai A."/>
            <person name="Itakura S."/>
            <person name="Fukuzumi Y."/>
            <person name="Fujimori Y."/>
            <person name="Komiyama M."/>
            <person name="Tashiro H."/>
            <person name="Tanigami A."/>
            <person name="Fujiwara T."/>
            <person name="Ono T."/>
            <person name="Yamada K."/>
            <person name="Fujii Y."/>
            <person name="Ozaki K."/>
            <person name="Hirao M."/>
            <person name="Ohmori Y."/>
            <person name="Kawabata A."/>
            <person name="Hikiji T."/>
            <person name="Kobatake N."/>
            <person name="Inagaki H."/>
            <person name="Ikema Y."/>
            <person name="Okamoto S."/>
            <person name="Okitani R."/>
            <person name="Kawakami T."/>
            <person name="Noguchi S."/>
            <person name="Itoh T."/>
            <person name="Shigeta K."/>
            <person name="Senba T."/>
            <person name="Matsumura K."/>
            <person name="Nakajima Y."/>
            <person name="Mizuno T."/>
            <person name="Morinaga M."/>
            <person name="Sasaki M."/>
            <person name="Togashi T."/>
            <person name="Oyama M."/>
            <person name="Hata H."/>
            <person name="Watanabe M."/>
            <person name="Komatsu T."/>
            <person name="Mizushima-Sugano J."/>
            <person name="Satoh T."/>
            <person name="Shirai Y."/>
            <person name="Takahashi Y."/>
            <person name="Nakagawa K."/>
            <person name="Okumura K."/>
            <person name="Nagase T."/>
            <person name="Nomura N."/>
            <person name="Kikuchi H."/>
            <person name="Masuho Y."/>
            <person name="Yamashita R."/>
            <person name="Nakai K."/>
            <person name="Yada T."/>
            <person name="Nakamura Y."/>
            <person name="Ohara O."/>
            <person name="Isogai T."/>
            <person name="Sugano S."/>
        </authorList>
    </citation>
    <scope>NUCLEOTIDE SEQUENCE [LARGE SCALE MRNA] (ISOFORMS 2; 3; 4 AND 5)</scope>
    <source>
        <tissue>Testis</tissue>
    </source>
</reference>
<reference key="3">
    <citation type="journal article" date="2006" name="Nature">
        <title>Human chromosome 11 DNA sequence and analysis including novel gene identification.</title>
        <authorList>
            <person name="Taylor T.D."/>
            <person name="Noguchi H."/>
            <person name="Totoki Y."/>
            <person name="Toyoda A."/>
            <person name="Kuroki Y."/>
            <person name="Dewar K."/>
            <person name="Lloyd C."/>
            <person name="Itoh T."/>
            <person name="Takeda T."/>
            <person name="Kim D.-W."/>
            <person name="She X."/>
            <person name="Barlow K.F."/>
            <person name="Bloom T."/>
            <person name="Bruford E."/>
            <person name="Chang J.L."/>
            <person name="Cuomo C.A."/>
            <person name="Eichler E."/>
            <person name="FitzGerald M.G."/>
            <person name="Jaffe D.B."/>
            <person name="LaButti K."/>
            <person name="Nicol R."/>
            <person name="Park H.-S."/>
            <person name="Seaman C."/>
            <person name="Sougnez C."/>
            <person name="Yang X."/>
            <person name="Zimmer A.R."/>
            <person name="Zody M.C."/>
            <person name="Birren B.W."/>
            <person name="Nusbaum C."/>
            <person name="Fujiyama A."/>
            <person name="Hattori M."/>
            <person name="Rogers J."/>
            <person name="Lander E.S."/>
            <person name="Sakaki Y."/>
        </authorList>
    </citation>
    <scope>NUCLEOTIDE SEQUENCE [LARGE SCALE GENOMIC DNA]</scope>
</reference>
<reference key="4">
    <citation type="journal article" date="2004" name="Genome Res.">
        <title>The status, quality, and expansion of the NIH full-length cDNA project: the Mammalian Gene Collection (MGC).</title>
        <authorList>
            <consortium name="The MGC Project Team"/>
        </authorList>
    </citation>
    <scope>NUCLEOTIDE SEQUENCE [LARGE SCALE MRNA] (ISOFORM 1)</scope>
    <source>
        <tissue>Uterus</tissue>
    </source>
</reference>
<reference key="5">
    <citation type="journal article" date="2009" name="Science">
        <title>Lysine acetylation targets protein complexes and co-regulates major cellular functions.</title>
        <authorList>
            <person name="Choudhary C."/>
            <person name="Kumar C."/>
            <person name="Gnad F."/>
            <person name="Nielsen M.L."/>
            <person name="Rehman M."/>
            <person name="Walther T.C."/>
            <person name="Olsen J.V."/>
            <person name="Mann M."/>
        </authorList>
    </citation>
    <scope>ACETYLATION [LARGE SCALE ANALYSIS] AT LYS-589</scope>
    <scope>IDENTIFICATION BY MASS SPECTROMETRY [LARGE SCALE ANALYSIS]</scope>
</reference>
<reference key="6">
    <citation type="journal article" date="2011" name="BMC Syst. Biol.">
        <title>Initial characterization of the human central proteome.</title>
        <authorList>
            <person name="Burkard T.R."/>
            <person name="Planyavsky M."/>
            <person name="Kaupe I."/>
            <person name="Breitwieser F.P."/>
            <person name="Buerckstuemmer T."/>
            <person name="Bennett K.L."/>
            <person name="Superti-Furga G."/>
            <person name="Colinge J."/>
        </authorList>
    </citation>
    <scope>IDENTIFICATION BY MASS SPECTROMETRY [LARGE SCALE ANALYSIS]</scope>
</reference>
<reference key="7">
    <citation type="journal article" date="2014" name="J. Proteomics">
        <title>An enzyme assisted RP-RPLC approach for in-depth analysis of human liver phosphoproteome.</title>
        <authorList>
            <person name="Bian Y."/>
            <person name="Song C."/>
            <person name="Cheng K."/>
            <person name="Dong M."/>
            <person name="Wang F."/>
            <person name="Huang J."/>
            <person name="Sun D."/>
            <person name="Wang L."/>
            <person name="Ye M."/>
            <person name="Zou H."/>
        </authorList>
    </citation>
    <scope>IDENTIFICATION BY MASS SPECTROMETRY [LARGE SCALE ANALYSIS]</scope>
    <source>
        <tissue>Liver</tissue>
    </source>
</reference>
<reference key="8">
    <citation type="journal article" date="2015" name="Proteomics">
        <title>N-terminome analysis of the human mitochondrial proteome.</title>
        <authorList>
            <person name="Vaca Jacome A.S."/>
            <person name="Rabilloud T."/>
            <person name="Schaeffer-Reiss C."/>
            <person name="Rompais M."/>
            <person name="Ayoub D."/>
            <person name="Lane L."/>
            <person name="Bairoch A."/>
            <person name="Van Dorsselaer A."/>
            <person name="Carapito C."/>
        </authorList>
    </citation>
    <scope>IDENTIFICATION BY MASS SPECTROMETRY [LARGE SCALE ANALYSIS]</scope>
</reference>
<reference key="9">
    <citation type="journal article" date="2017" name="Nat. Cell Biol.">
        <title>PARL mediates Smac proteolytic maturation in mitochondria to promote apoptosis.</title>
        <authorList>
            <person name="Saita S."/>
            <person name="Nolte H."/>
            <person name="Fiedler K.U."/>
            <person name="Kashkar H."/>
            <person name="Venne A.S."/>
            <person name="Zahedi R.P."/>
            <person name="Krueger M."/>
            <person name="Langer T."/>
        </authorList>
    </citation>
    <scope>PROTEOLYTIC CLEAVAGE</scope>
</reference>
<reference key="10">
    <citation type="journal article" date="2019" name="IScience">
        <title>Structural Basis of Mitochondrial Scaffolds by Prohibitin Complexes: Insight into a Role of the Coiled-Coil Region.</title>
        <authorList>
            <person name="Yoshinaka T."/>
            <person name="Kosako H."/>
            <person name="Yoshizumi T."/>
            <person name="Furukawa R."/>
            <person name="Hirano Y."/>
            <person name="Kuge O."/>
            <person name="Tamada T."/>
            <person name="Koshiba T."/>
        </authorList>
    </citation>
    <scope>INTERACTION WITH MAVS; PHB AND PHB2</scope>
    <scope>FUNCTION</scope>
    <scope>SUBCELLULAR LOCATION</scope>
</reference>
<reference key="11">
    <citation type="journal article" date="2020" name="Int. J. Biochem. Cell Biol.">
        <title>Human CLPB forms ATP-dependent complexes in the mitochondrial intermembrane space.</title>
        <authorList>
            <person name="Thevarajan I."/>
            <person name="Zolkiewski M."/>
            <person name="Zolkiewska A."/>
        </authorList>
    </citation>
    <scope>SUBCELLULAR LOCATION</scope>
</reference>
<reference key="12">
    <citation type="journal article" date="2022" name="Biochem. Biophys. Res. Commun.">
        <title>Human mitochondrial AAA+ ATPase SKD3/CLPB assembles into nucleotide-stabilized dodecamers.</title>
        <authorList>
            <person name="Spaulding Z."/>
            <person name="Thevarajan I."/>
            <person name="Schrag L.G."/>
            <person name="Zubcevic L."/>
            <person name="Zolkiewska A."/>
            <person name="Zolkiewski M."/>
        </authorList>
    </citation>
    <scope>FUNCTION</scope>
    <scope>CATALYTIC ACTIVITY</scope>
    <scope>SUBUNIT</scope>
</reference>
<reference evidence="17 18" key="13">
    <citation type="journal article" date="2022" name="Cell Rep.">
        <title>Unique structural features govern the activity of a human mitochondrial AAA+ disaggregase, Skd3.</title>
        <authorList>
            <person name="Cupo R.R."/>
            <person name="Rizo A.N."/>
            <person name="Braun G.A."/>
            <person name="Tse E."/>
            <person name="Chuang E."/>
            <person name="Gupta K."/>
            <person name="Southworth D.R."/>
            <person name="Shorter J."/>
        </authorList>
    </citation>
    <scope>STRUCTURE BY ELECTRON MICROSCOPY (2.90 ANGSTROMS) OF 127-707 IN COMPLEX WITH ADP AND PROTEIN SUBSTRATE</scope>
    <scope>FUNCTION</scope>
    <scope>CATALYTIC ACTIVITY</scope>
    <scope>ACTIVITY REGULATION</scope>
    <scope>BIOPHYSICOCHEMICAL PROPERTIES</scope>
    <scope>SUBUNIT</scope>
    <scope>DOMAIN</scope>
    <scope>MUTAGENESIS OF ARG-417 AND VAL-431</scope>
</reference>
<reference evidence="19 20" key="14">
    <citation type="journal article" date="2023" name="PLoS Biol.">
        <title>Comprehensive structural characterization of the human AAA+ disaggregase CLPB in the apo- and substrate-bound states reveals a unique mode of action driven by oligomerization.</title>
        <authorList>
            <person name="Wu D."/>
            <person name="Liu Y."/>
            <person name="Dai Y."/>
            <person name="Wang G."/>
            <person name="Lu G."/>
            <person name="Chen Y."/>
            <person name="Li N."/>
            <person name="Lin J."/>
            <person name="Gao N."/>
        </authorList>
    </citation>
    <scope>STRUCTURE BY ELECTRON MICROSCOPY (3.7 ANGSTROMS) OF ISOFORM 2 IN COMPLEX WITH ATP AND PROTEIN SUBSTRATE</scope>
    <scope>X-RAY CRYSTALLOGRAPHY (2.1 ANGSTROMS) OF 128-327</scope>
    <scope>FUNCTION</scope>
    <scope>CATALYTIC ACTIVITY</scope>
    <scope>SUBUNIT</scope>
    <scope>DOMAIN</scope>
    <scope>MUTAGENESIS OF ARG-178; ARG-257 AND GLU-455</scope>
</reference>
<reference key="15">
    <citation type="journal article" date="2020" name="Elife">
        <title>Skd3 (human ClpB) is a potent mitochondrial protein disaggregase that is inactivated by 3-methylglutaconic aciduria-linked mutations.</title>
        <authorList>
            <person name="Cupo R.R."/>
            <person name="Shorter J."/>
        </authorList>
    </citation>
    <scope>FUNCTION</scope>
    <scope>DOMAIN</scope>
    <scope>REGION</scope>
    <scope>MUTAGENESIS OF LYS-387; TYR-430; GLU-455; ARG-475 AND ARG-650</scope>
    <scope>CHARACTERIZATION OF VARIANTS MGCA7B MET-268 AND VAL-591</scope>
</reference>
<reference key="16">
    <citation type="journal article" date="2021" name="Genet. Med.">
        <title>Neutropenia and intellectual disability are hallmarks of biallelic and de novo CLPB deficiency.</title>
        <authorList>
            <person name="Wortmann S.B."/>
            <person name="Zietkiewicz S."/>
            <person name="Guerrero-Castillo S."/>
            <person name="Feichtinger R.G."/>
            <person name="Wagner M."/>
            <person name="Russell J."/>
            <person name="Ellaway C."/>
            <person name="Mroz D."/>
            <person name="Wyszkowski H."/>
            <person name="Weis D."/>
            <person name="Hannibal I."/>
            <person name="von Stuelpnagel C."/>
            <person name="Cabrera-Orefice A."/>
            <person name="Lichter-Konecki U."/>
            <person name="Gaesser J."/>
            <person name="Windreich R."/>
            <person name="Myers K.C."/>
            <person name="Lorsbach R."/>
            <person name="Dale R.C."/>
            <person name="Gersting S."/>
            <person name="Prada C.E."/>
            <person name="Christodoulou J."/>
            <person name="Wolf N.I."/>
            <person name="Venselaar H."/>
            <person name="Mayr J.A."/>
            <person name="Wevers R.A."/>
        </authorList>
    </citation>
    <scope>INVOLVEMENT IN MGCA7A</scope>
    <scope>VARIANTS MGCA7A THR-404; LEU-427; ARG-560 AND TRP-561</scope>
    <scope>CHARACTERIZATION OF VARIANTS MGCA7A THR-404; LEU-427 AND ARG-560</scope>
</reference>
<reference key="17">
    <citation type="journal article" date="2022" name="Blood">
        <title>Heterozygous variants of CLPB are a cause of severe congenital neutropenia.</title>
        <authorList>
            <person name="Warren J.T."/>
            <person name="Cupo R.R."/>
            <person name="Wattanasirakul P."/>
            <person name="Spencer D.H."/>
            <person name="Locke A.E."/>
            <person name="Makaryan V."/>
            <person name="Bolyard A.A."/>
            <person name="Kelley M.L."/>
            <person name="Kingston N.L."/>
            <person name="Shorter J."/>
            <person name="Bellanne-Chantelot C."/>
            <person name="Donadieu J."/>
            <person name="Dale D.C."/>
            <person name="Link D.C."/>
        </authorList>
    </citation>
    <scope>INVOLVEMENT IN SCN9</scope>
    <scope>VARIANTS SCN9 LYS-388; LYS-496; LYS-557; GLN-561; GLY-561 AND CYS-620</scope>
    <scope>VARIANTS TRP-327 AND HIS-603</scope>
    <scope>CHARACTERIZATION OF VARIANTS SCN9 LYS-496; LYS-557; GLY-561 AND CYS-620</scope>
    <scope>CHARACTERIZATION OF VARIANT HIS-603</scope>
    <scope>CHARACTERIZATION OF VARIANT MGCA7B GLY-408</scope>
    <scope>FUNCTION</scope>
    <scope>SUBCELLULAR LOCATION</scope>
</reference>
<reference key="18">
    <citation type="journal article" date="2015" name="Am. J. Hum. Genet.">
        <title>CLPB mutations cause 3-methylglutaconic aciduria, progressive brain atrophy, intellectual disability, congenital neutropenia, cataracts, movement disorder.</title>
        <authorList>
            <person name="Wortmann S.B."/>
            <person name="Zietkiewicz S."/>
            <person name="Kousi M."/>
            <person name="Szklarczyk R."/>
            <person name="Haack T.B."/>
            <person name="Gersting S.W."/>
            <person name="Muntau A.C."/>
            <person name="Rakovic A."/>
            <person name="Renkema G.H."/>
            <person name="Rodenburg R.J."/>
            <person name="Strom T.M."/>
            <person name="Meitinger T."/>
            <person name="Rubio-Gozalbo M.E."/>
            <person name="Chrusciel E."/>
            <person name="Distelmaier F."/>
            <person name="Golzio C."/>
            <person name="Jansen J.H."/>
            <person name="van Karnebeek C."/>
            <person name="Lillquist Y."/>
            <person name="Luecke T."/>
            <person name="Ounap K."/>
            <person name="Zordania R."/>
            <person name="Yaplito-Lee J."/>
            <person name="van Bokhoven H."/>
            <person name="Spelbrink J.N."/>
            <person name="Vaz F.M."/>
            <person name="Pras-Raves M."/>
            <person name="Ploski R."/>
            <person name="Pronicka E."/>
            <person name="Klein C."/>
            <person name="Willemsen M.A."/>
            <person name="de Brouwer A.P."/>
            <person name="Prokisch H."/>
            <person name="Katsanis N."/>
            <person name="Wevers R.A."/>
        </authorList>
    </citation>
    <scope>VARIANTS MGCA7B CYS-272; GLY-408; ILE-411; 435-ASP-PRO-436 DELINS ASP-PRO; ARG-486; LYS-501; CYS-567; VAL-591; CYS-617; VAL-646 AND ASN-682</scope>
    <scope>CATALYTIC ACTIVITY</scope>
    <scope>SUBCELLULAR LOCATION</scope>
    <scope>TISSUE SPECIFICITY</scope>
</reference>
<reference key="19">
    <citation type="journal article" date="2015" name="Am. J. Hum. Genet.">
        <title>CLPB variants associated with autosomal-recessive mitochondrial disorder with cataract, neutropenia, epilepsy, and methylglutaconic aciduria.</title>
        <authorList>
            <person name="Saunders C."/>
            <person name="Smith L."/>
            <person name="Wibrand F."/>
            <person name="Ravn K."/>
            <person name="Bross P."/>
            <person name="Thiffault I."/>
            <person name="Christensen M."/>
            <person name="Atherton A."/>
            <person name="Farrow E."/>
            <person name="Miller N."/>
            <person name="Kingsmore S.F."/>
            <person name="Ostergaard E."/>
        </authorList>
    </citation>
    <scope>VARIANT MGCA7B MET-268</scope>
    <scope>TISSUE SPECIFICITY</scope>
</reference>
<reference key="20">
    <citation type="journal article" date="2022" name="Pediatr. Allergy Immunol.">
        <title>Biallelic CLPB mutation associated with isolated neutropenia and 3-MGA-uria.</title>
        <authorList>
            <person name="Rivalta B."/>
            <person name="Torraco A."/>
            <person name="Martinelli D."/>
            <person name="Luciani M."/>
            <person name="Carrozzo R."/>
            <person name="Finocchi A."/>
        </authorList>
    </citation>
    <scope>VARIANTS MGCA7B CYS-628 AND LYS-635</scope>
</reference>
<accession>Q9H078</accession>
<accession>B4DXJ7</accession>
<accession>B4DXP7</accession>
<accession>B4DXW4</accession>
<accession>E7EWN6</accession>
<accession>F8W7P6</accession>
<accession>Q8ND11</accession>
<accession>Q9H8Y0</accession>
<evidence type="ECO:0000255" key="1"/>
<evidence type="ECO:0000269" key="2">
    <source>
    </source>
</evidence>
<evidence type="ECO:0000269" key="3">
    <source>
    </source>
</evidence>
<evidence type="ECO:0000269" key="4">
    <source>
    </source>
</evidence>
<evidence type="ECO:0000269" key="5">
    <source>
    </source>
</evidence>
<evidence type="ECO:0000269" key="6">
    <source>
    </source>
</evidence>
<evidence type="ECO:0000269" key="7">
    <source>
    </source>
</evidence>
<evidence type="ECO:0000269" key="8">
    <source>
    </source>
</evidence>
<evidence type="ECO:0000269" key="9">
    <source>
    </source>
</evidence>
<evidence type="ECO:0000269" key="10">
    <source>
    </source>
</evidence>
<evidence type="ECO:0000269" key="11">
    <source>
    </source>
</evidence>
<evidence type="ECO:0000269" key="12">
    <source>
    </source>
</evidence>
<evidence type="ECO:0000269" key="13">
    <source>
    </source>
</evidence>
<evidence type="ECO:0000303" key="14">
    <source>
    </source>
</evidence>
<evidence type="ECO:0000305" key="15"/>
<evidence type="ECO:0000312" key="16">
    <source>
        <dbReference type="HGNC" id="HGNC:30664"/>
    </source>
</evidence>
<evidence type="ECO:0007744" key="17">
    <source>
        <dbReference type="PDB" id="7TTR"/>
    </source>
</evidence>
<evidence type="ECO:0007744" key="18">
    <source>
        <dbReference type="PDB" id="7TTS"/>
    </source>
</evidence>
<evidence type="ECO:0007744" key="19">
    <source>
        <dbReference type="PDB" id="7XBK"/>
    </source>
</evidence>
<evidence type="ECO:0007744" key="20">
    <source>
        <dbReference type="PDB" id="7XC5"/>
    </source>
</evidence>
<evidence type="ECO:0007744" key="21">
    <source>
    </source>
</evidence>
<evidence type="ECO:0007829" key="22">
    <source>
        <dbReference type="PDB" id="7TTR"/>
    </source>
</evidence>
<evidence type="ECO:0007829" key="23">
    <source>
        <dbReference type="PDB" id="7TTS"/>
    </source>
</evidence>
<evidence type="ECO:0007829" key="24">
    <source>
        <dbReference type="PDB" id="7US2"/>
    </source>
</evidence>
<evidence type="ECO:0007829" key="25">
    <source>
        <dbReference type="PDB" id="8DEH"/>
    </source>
</evidence>
<evidence type="ECO:0007829" key="26">
    <source>
        <dbReference type="PDB" id="8FDS"/>
    </source>
</evidence>
<protein>
    <recommendedName>
        <fullName>Mitochondrial disaggregase</fullName>
        <ecNumber evidence="2 10 12 13">3.6.1.-</ecNumber>
    </recommendedName>
    <alternativeName>
        <fullName>Suppressor of potassium transport defect 3</fullName>
    </alternativeName>
    <component>
        <recommendedName>
            <fullName>Mitochondrial disaggregase, cleaved form</fullName>
        </recommendedName>
    </component>
</protein>
<organism>
    <name type="scientific">Homo sapiens</name>
    <name type="common">Human</name>
    <dbReference type="NCBI Taxonomy" id="9606"/>
    <lineage>
        <taxon>Eukaryota</taxon>
        <taxon>Metazoa</taxon>
        <taxon>Chordata</taxon>
        <taxon>Craniata</taxon>
        <taxon>Vertebrata</taxon>
        <taxon>Euteleostomi</taxon>
        <taxon>Mammalia</taxon>
        <taxon>Eutheria</taxon>
        <taxon>Euarchontoglires</taxon>
        <taxon>Primates</taxon>
        <taxon>Haplorrhini</taxon>
        <taxon>Catarrhini</taxon>
        <taxon>Hominidae</taxon>
        <taxon>Homo</taxon>
    </lineage>
</organism>